<evidence type="ECO:0000250" key="1">
    <source>
        <dbReference type="UniProtKB" id="Q1K8B6"/>
    </source>
</evidence>
<evidence type="ECO:0000255" key="2"/>
<evidence type="ECO:0000255" key="3">
    <source>
        <dbReference type="PROSITE-ProRule" id="PRU00498"/>
    </source>
</evidence>
<evidence type="ECO:0000269" key="4">
    <source>
    </source>
</evidence>
<evidence type="ECO:0000269" key="5">
    <source>
    </source>
</evidence>
<evidence type="ECO:0000269" key="6">
    <source>
    </source>
</evidence>
<evidence type="ECO:0000303" key="7">
    <source>
    </source>
</evidence>
<evidence type="ECO:0000303" key="8">
    <source>
    </source>
</evidence>
<evidence type="ECO:0000305" key="9"/>
<evidence type="ECO:0000305" key="10">
    <source>
    </source>
</evidence>
<evidence type="ECO:0007744" key="11">
    <source>
        <dbReference type="PDB" id="4B5Q"/>
    </source>
</evidence>
<evidence type="ECO:0007829" key="12">
    <source>
        <dbReference type="PDB" id="4B5Q"/>
    </source>
</evidence>
<protein>
    <recommendedName>
        <fullName evidence="8">AA9 family lytic polysaccharide monooxygenase D</fullName>
        <shortName evidence="8">LPMO9D</shortName>
        <ecNumber evidence="4 6">1.14.99.56</ecNumber>
    </recommendedName>
    <alternativeName>
        <fullName evidence="9">Cellulase LPMO9D</fullName>
    </alternativeName>
    <alternativeName>
        <fullName evidence="9">Endo-beta-1,4-glucanase LPMO9D</fullName>
        <shortName evidence="9">Endoglucanase LPMO9D</shortName>
    </alternativeName>
    <alternativeName>
        <fullName evidence="7">Glycosyl hydrolase 61 family protein D</fullName>
    </alternativeName>
</protein>
<accession>H1AE14</accession>
<reference key="1">
    <citation type="journal article" date="2011" name="PLoS ONE">
        <title>The putative endoglucanase PcGH61D from Phanerochaete chrysosporium is a metal-dependent oxidative enzyme that cleaves cellulose.</title>
        <authorList>
            <person name="Westereng B."/>
            <person name="Ishida T."/>
            <person name="Vaaje-Kolstad G."/>
            <person name="Wu M."/>
            <person name="Eijsink V.G."/>
            <person name="Igarashi K."/>
            <person name="Samejima M."/>
            <person name="Staahlberg J."/>
            <person name="Horn S.J."/>
            <person name="Sandgren M."/>
        </authorList>
    </citation>
    <scope>NUCLEOTIDE SEQUENCE [MRNA]</scope>
    <scope>FUNCTION</scope>
    <scope>CATALYTIC ACTIVITY</scope>
    <scope>BIOTECHNOLOGY</scope>
    <source>
        <strain>K-3</strain>
    </source>
</reference>
<reference key="2">
    <citation type="journal article" date="2019" name="Biotechnol. J.">
        <title>Structural features on the substrate-sinding surface of fungal lytic polysaccharide monooxygenases determine their oxidative regioselectivity.</title>
        <authorList>
            <person name="Danneels B."/>
            <person name="Tanghe M."/>
            <person name="Desmet T."/>
        </authorList>
    </citation>
    <scope>FUNCTION</scope>
    <scope>CATALYTIC ACTIVITY</scope>
    <scope>DOMAIN</scope>
    <scope>MUTAGENESIS OF TYR-46; TYR-93 AND TYR-216</scope>
</reference>
<reference evidence="11" key="3">
    <citation type="journal article" date="2013" name="J. Biol. Chem.">
        <title>Crystal structure and computational characterization of the lytic polysaccharide monooxygenase GH61D from the Basidiomycota fungus Phanerochaete chrysosporium.</title>
        <authorList>
            <person name="Wu M."/>
            <person name="Beckham G.T."/>
            <person name="Larsson A.M."/>
            <person name="Ishida T."/>
            <person name="Kim S."/>
            <person name="Payne C.M."/>
            <person name="Himmel M.E."/>
            <person name="Crowley M.F."/>
            <person name="Horn S.J."/>
            <person name="Westereng B."/>
            <person name="Igarashi K."/>
            <person name="Samejima M."/>
            <person name="Stahlberg J."/>
            <person name="Eijsink V.G."/>
            <person name="Sandgren M."/>
        </authorList>
    </citation>
    <scope>X-RAY CRYSTALLOGRAPHY (1.75 ANGSTROMS) OF 19-235 IN COMPLEX WITH COPPER</scope>
    <scope>GLYCOSYLATION AT SER-29</scope>
    <scope>DISULFIDE BONDS</scope>
    <scope>COFACTOR</scope>
</reference>
<feature type="signal peptide" evidence="2">
    <location>
        <begin position="1"/>
        <end position="18"/>
    </location>
</feature>
<feature type="chain" id="PRO_5003547310" description="AA9 family lytic polysaccharide monooxygenase D">
    <location>
        <begin position="19"/>
        <end position="235"/>
    </location>
</feature>
<feature type="binding site" evidence="5 11">
    <location>
        <position position="19"/>
    </location>
    <ligand>
        <name>Cu(2+)</name>
        <dbReference type="ChEBI" id="CHEBI:29036"/>
        <note>catalytic</note>
    </ligand>
</feature>
<feature type="binding site" evidence="5 11">
    <location>
        <position position="94"/>
    </location>
    <ligand>
        <name>Cu(2+)</name>
        <dbReference type="ChEBI" id="CHEBI:29036"/>
        <note>catalytic</note>
    </ligand>
</feature>
<feature type="binding site" evidence="1">
    <location>
        <position position="167"/>
    </location>
    <ligand>
        <name>O2</name>
        <dbReference type="ChEBI" id="CHEBI:15379"/>
    </ligand>
</feature>
<feature type="binding site" evidence="1">
    <location>
        <position position="176"/>
    </location>
    <ligand>
        <name>O2</name>
        <dbReference type="ChEBI" id="CHEBI:15379"/>
    </ligand>
</feature>
<feature type="binding site" evidence="5 11">
    <location>
        <position position="178"/>
    </location>
    <ligand>
        <name>Cu(2+)</name>
        <dbReference type="ChEBI" id="CHEBI:29036"/>
        <note>catalytic</note>
    </ligand>
</feature>
<feature type="glycosylation site" description="O-linked (Man...) serine" evidence="5 11">
    <location>
        <position position="29"/>
    </location>
</feature>
<feature type="glycosylation site" description="N-linked (GlcNAc...) asparagine" evidence="3">
    <location>
        <position position="221"/>
    </location>
</feature>
<feature type="disulfide bond" evidence="5 11">
    <location>
        <begin position="61"/>
        <end position="181"/>
    </location>
</feature>
<feature type="mutagenesis site" description="Leads to lower C1-oxidation." evidence="6">
    <original>Y</original>
    <variation>A</variation>
    <variation>F</variation>
    <variation>W</variation>
    <location>
        <position position="46"/>
    </location>
</feature>
<feature type="mutagenesis site" description="Leads to lower C1-oxidation." evidence="6">
    <original>Y</original>
    <variation>A</variation>
    <variation>F</variation>
    <variation>W</variation>
    <location>
        <position position="93"/>
    </location>
</feature>
<feature type="mutagenesis site" description="Leads to lower C1-oxidation." evidence="6">
    <original>Y</original>
    <variation>A</variation>
    <variation>F</variation>
    <variation>W</variation>
    <location>
        <position position="216"/>
    </location>
</feature>
<feature type="strand" evidence="12">
    <location>
        <begin position="24"/>
        <end position="26"/>
    </location>
</feature>
<feature type="turn" evidence="12">
    <location>
        <begin position="35"/>
        <end position="37"/>
    </location>
</feature>
<feature type="turn" evidence="12">
    <location>
        <begin position="43"/>
        <end position="47"/>
    </location>
</feature>
<feature type="helix" evidence="12">
    <location>
        <begin position="57"/>
        <end position="59"/>
    </location>
</feature>
<feature type="strand" evidence="12">
    <location>
        <begin position="63"/>
        <end position="65"/>
    </location>
</feature>
<feature type="turn" evidence="12">
    <location>
        <begin position="66"/>
        <end position="68"/>
    </location>
</feature>
<feature type="helix" evidence="12">
    <location>
        <begin position="70"/>
        <end position="72"/>
    </location>
</feature>
<feature type="strand" evidence="12">
    <location>
        <begin position="76"/>
        <end position="79"/>
    </location>
</feature>
<feature type="strand" evidence="12">
    <location>
        <begin position="83"/>
        <end position="87"/>
    </location>
</feature>
<feature type="strand" evidence="12">
    <location>
        <begin position="96"/>
        <end position="104"/>
    </location>
</feature>
<feature type="turn" evidence="12">
    <location>
        <begin position="112"/>
        <end position="115"/>
    </location>
</feature>
<feature type="strand" evidence="12">
    <location>
        <begin position="120"/>
        <end position="126"/>
    </location>
</feature>
<feature type="strand" evidence="12">
    <location>
        <begin position="129"/>
        <end position="131"/>
    </location>
</feature>
<feature type="strand" evidence="12">
    <location>
        <begin position="134"/>
        <end position="136"/>
    </location>
</feature>
<feature type="strand" evidence="12">
    <location>
        <begin position="143"/>
        <end position="147"/>
    </location>
</feature>
<feature type="strand" evidence="12">
    <location>
        <begin position="154"/>
        <end position="165"/>
    </location>
</feature>
<feature type="turn" evidence="12">
    <location>
        <begin position="167"/>
        <end position="170"/>
    </location>
</feature>
<feature type="strand" evidence="12">
    <location>
        <begin position="176"/>
        <end position="188"/>
    </location>
</feature>
<feature type="turn" evidence="12">
    <location>
        <begin position="200"/>
        <end position="202"/>
    </location>
</feature>
<feature type="turn" evidence="12">
    <location>
        <begin position="209"/>
        <end position="211"/>
    </location>
</feature>
<feature type="strand" evidence="12">
    <location>
        <begin position="215"/>
        <end position="217"/>
    </location>
</feature>
<gene>
    <name evidence="8" type="primary">LPMO9D</name>
    <name evidence="7" type="synonym">gh61D</name>
</gene>
<sequence length="235" mass="25351">MKAFFAVLAVVSAPFVLGHYTFPDFIEPSGTVTGDWVYVRETQNHYSNGPVTDVTSPEFRCYELDLQNTAGQTQTATVSAGDTVGFKANSAIYHPGYLDVMMSPASPAANSPEAGTGQTWFKIYEEKPQFENGQLVFDTTQQEVTFTIPKSLPSGQYLLRIEQIALHVASSYGGAQFYIGCAQLNVENGGNGTPGPLVSIPGVYTGYEPGILINIYNLPKNFTGYPAPGPAVWQG</sequence>
<comment type="function">
    <text evidence="4 6">Lytic polysaccharide monooxygenase (LPMO) that depolymerizes crystalline and amorphous polysaccharides via the oxidation of scissile alpha- or beta-(1-4)-glycosidic bonds, yielding only C1 oxidation products (PubMed:22132148, PubMed:30238672). Catalysis by LPMOs requires the reduction of the active-site copper from Cu(II) to Cu(I) by a reducing agent and H(2)O(2) or O(2) as a cosubstrate (PubMed:22132148).</text>
</comment>
<comment type="catalytic activity">
    <reaction evidence="4 6">
        <text>[(1-&gt;4)-beta-D-glucosyl]n+m + reduced acceptor + O2 = 4-dehydro-beta-D-glucosyl-[(1-&gt;4)-beta-D-glucosyl]n-1 + [(1-&gt;4)-beta-D-glucosyl]m + acceptor + H2O.</text>
        <dbReference type="EC" id="1.14.99.56"/>
    </reaction>
</comment>
<comment type="cofactor">
    <cofactor evidence="5">
        <name>Cu(2+)</name>
        <dbReference type="ChEBI" id="CHEBI:29036"/>
    </cofactor>
    <text evidence="5">Binds 1 copper ion per subunit.</text>
</comment>
<comment type="subcellular location">
    <subcellularLocation>
        <location evidence="10">Secreted</location>
    </subcellularLocation>
</comment>
<comment type="domain">
    <text evidence="6">Has a modular structure: an endo-beta-1,4-glucanase catalytic module at the N-terminus, a linker rich in serines and threonines, and a C-terminal carbohydrate-binding module (CBM) (PubMed:30238672). The CBM domain is essential for binding to and subsequent oxidative degradation of polysaccharide substrate (PubMed:30238672).</text>
</comment>
<comment type="biotechnology">
    <text evidence="4">Lignocellulose is the most abundant polymeric composite on Earth and is a recalcitrant but promising renewable substrate for industrial biotechnology applications. Together with cellobiose dehydrogenases (CDHs) an enzymatic system capable of oxidative cellulose cleavage is formed, which increases the efficiency of cellulases and put LPMOs at focus of biofuel research.</text>
</comment>
<comment type="similarity">
    <text evidence="9">Belongs to the polysaccharide monooxygenase AA9 family.</text>
</comment>
<proteinExistence type="evidence at protein level"/>
<organism>
    <name type="scientific">Phanerodontia chrysosporium</name>
    <name type="common">White-rot fungus</name>
    <name type="synonym">Sporotrichum pruinosum</name>
    <dbReference type="NCBI Taxonomy" id="2822231"/>
    <lineage>
        <taxon>Eukaryota</taxon>
        <taxon>Fungi</taxon>
        <taxon>Dikarya</taxon>
        <taxon>Basidiomycota</taxon>
        <taxon>Agaricomycotina</taxon>
        <taxon>Agaricomycetes</taxon>
        <taxon>Polyporales</taxon>
        <taxon>Phanerochaetaceae</taxon>
        <taxon>Phanerodontia</taxon>
    </lineage>
</organism>
<name>LP9D_PHACH</name>
<dbReference type="EC" id="1.14.99.56" evidence="4 6"/>
<dbReference type="EMBL" id="AB670125">
    <property type="protein sequence ID" value="BAL43430.1"/>
    <property type="molecule type" value="mRNA"/>
</dbReference>
<dbReference type="PDB" id="4B5Q">
    <property type="method" value="X-ray"/>
    <property type="resolution" value="1.75 A"/>
    <property type="chains" value="A/B=19-235"/>
</dbReference>
<dbReference type="PDBsum" id="4B5Q"/>
<dbReference type="SMR" id="H1AE14"/>
<dbReference type="GlyCosmos" id="H1AE14">
    <property type="glycosylation" value="1 site, No reported glycans"/>
</dbReference>
<dbReference type="VEuPathDB" id="FungiDB:AGR57_7810"/>
<dbReference type="BRENDA" id="1.14.99.54">
    <property type="organism ID" value="1380"/>
</dbReference>
<dbReference type="EvolutionaryTrace" id="H1AE14"/>
<dbReference type="GO" id="GO:0005576">
    <property type="term" value="C:extracellular region"/>
    <property type="evidence" value="ECO:0007669"/>
    <property type="project" value="UniProtKB-SubCell"/>
</dbReference>
<dbReference type="GO" id="GO:0046872">
    <property type="term" value="F:metal ion binding"/>
    <property type="evidence" value="ECO:0007669"/>
    <property type="project" value="UniProtKB-KW"/>
</dbReference>
<dbReference type="GO" id="GO:0004497">
    <property type="term" value="F:monooxygenase activity"/>
    <property type="evidence" value="ECO:0007669"/>
    <property type="project" value="UniProtKB-KW"/>
</dbReference>
<dbReference type="GO" id="GO:0030245">
    <property type="term" value="P:cellulose catabolic process"/>
    <property type="evidence" value="ECO:0007669"/>
    <property type="project" value="UniProtKB-KW"/>
</dbReference>
<dbReference type="CDD" id="cd21175">
    <property type="entry name" value="LPMO_AA9"/>
    <property type="match status" value="1"/>
</dbReference>
<dbReference type="Gene3D" id="2.70.50.70">
    <property type="match status" value="1"/>
</dbReference>
<dbReference type="InterPro" id="IPR049892">
    <property type="entry name" value="AA9"/>
</dbReference>
<dbReference type="InterPro" id="IPR005103">
    <property type="entry name" value="AA9_LPMO"/>
</dbReference>
<dbReference type="PANTHER" id="PTHR33353:SF10">
    <property type="entry name" value="ENDO-BETA-1,4-GLUCANASE D"/>
    <property type="match status" value="1"/>
</dbReference>
<dbReference type="PANTHER" id="PTHR33353">
    <property type="entry name" value="PUTATIVE (AFU_ORTHOLOGUE AFUA_1G12560)-RELATED"/>
    <property type="match status" value="1"/>
</dbReference>
<dbReference type="Pfam" id="PF03443">
    <property type="entry name" value="AA9"/>
    <property type="match status" value="1"/>
</dbReference>
<keyword id="KW-0002">3D-structure</keyword>
<keyword id="KW-0119">Carbohydrate metabolism</keyword>
<keyword id="KW-0136">Cellulose degradation</keyword>
<keyword id="KW-0186">Copper</keyword>
<keyword id="KW-1015">Disulfide bond</keyword>
<keyword id="KW-0325">Glycoprotein</keyword>
<keyword id="KW-0479">Metal-binding</keyword>
<keyword id="KW-0503">Monooxygenase</keyword>
<keyword id="KW-0560">Oxidoreductase</keyword>
<keyword id="KW-0624">Polysaccharide degradation</keyword>
<keyword id="KW-0964">Secreted</keyword>
<keyword id="KW-0732">Signal</keyword>